<reference key="1">
    <citation type="submission" date="2006-05" db="EMBL/GenBank/DDBJ databases">
        <authorList>
            <consortium name="Genoscope"/>
        </authorList>
    </citation>
    <scope>NUCLEOTIDE SEQUENCE [LARGE SCALE GENOMIC DNA]</scope>
    <source>
        <strain>WH7803</strain>
    </source>
</reference>
<proteinExistence type="inferred from homology"/>
<comment type="function">
    <text evidence="1">Bifunctional enzyme that catalyzes the enolization of 2,3-diketo-5-methylthiopentyl-1-phosphate (DK-MTP-1-P) into the intermediate 2-hydroxy-3-keto-5-methylthiopentenyl-1-phosphate (HK-MTPenyl-1-P), which is then dephosphorylated to form the acireductone 1,2-dihydroxy-3-keto-5-methylthiopentene (DHK-MTPene).</text>
</comment>
<comment type="catalytic activity">
    <reaction evidence="1">
        <text>5-methylsulfanyl-2,3-dioxopentyl phosphate + H2O = 1,2-dihydroxy-5-(methylsulfanyl)pent-1-en-3-one + phosphate</text>
        <dbReference type="Rhea" id="RHEA:21700"/>
        <dbReference type="ChEBI" id="CHEBI:15377"/>
        <dbReference type="ChEBI" id="CHEBI:43474"/>
        <dbReference type="ChEBI" id="CHEBI:49252"/>
        <dbReference type="ChEBI" id="CHEBI:58828"/>
        <dbReference type="EC" id="3.1.3.77"/>
    </reaction>
</comment>
<comment type="cofactor">
    <cofactor evidence="1">
        <name>Mg(2+)</name>
        <dbReference type="ChEBI" id="CHEBI:18420"/>
    </cofactor>
    <text evidence="1">Binds 1 Mg(2+) ion per subunit.</text>
</comment>
<comment type="pathway">
    <text evidence="1">Amino-acid biosynthesis; L-methionine biosynthesis via salvage pathway; L-methionine from S-methyl-5-thio-alpha-D-ribose 1-phosphate: step 3/6.</text>
</comment>
<comment type="pathway">
    <text evidence="1">Amino-acid biosynthesis; L-methionine biosynthesis via salvage pathway; L-methionine from S-methyl-5-thio-alpha-D-ribose 1-phosphate: step 4/6.</text>
</comment>
<comment type="subunit">
    <text evidence="1">Monomer.</text>
</comment>
<comment type="similarity">
    <text evidence="1">Belongs to the HAD-like hydrolase superfamily. MasA/MtnC family.</text>
</comment>
<keyword id="KW-0028">Amino-acid biosynthesis</keyword>
<keyword id="KW-0378">Hydrolase</keyword>
<keyword id="KW-0460">Magnesium</keyword>
<keyword id="KW-0479">Metal-binding</keyword>
<keyword id="KW-0486">Methionine biosynthesis</keyword>
<keyword id="KW-1185">Reference proteome</keyword>
<protein>
    <recommendedName>
        <fullName evidence="1">Enolase-phosphatase E1</fullName>
        <ecNumber evidence="1">3.1.3.77</ecNumber>
    </recommendedName>
    <alternativeName>
        <fullName evidence="1">2,3-diketo-5-methylthio-1-phosphopentane phosphatase</fullName>
    </alternativeName>
</protein>
<feature type="chain" id="PRO_0000357424" description="Enolase-phosphatase E1">
    <location>
        <begin position="1"/>
        <end position="242"/>
    </location>
</feature>
<name>MTNC_SYNPW</name>
<accession>A5GJ48</accession>
<evidence type="ECO:0000255" key="1">
    <source>
        <dbReference type="HAMAP-Rule" id="MF_01681"/>
    </source>
</evidence>
<sequence length="242" mass="26814">MIKAIVLDIEGTTCPVTFVSQTLFPFARRQLSKTICSENRPSNVTAAIEEAIAEWKNDPESKSQALLLRASNQNQPTSEDIIHYFDHLIQNDRKSTALKELQGIIWEQGYAAGELQSPLYGDVVPALNAWTQQGITLAVYSSGSVKAQQLLYAHTTDGDITNRFSQWFDTRTGPKLNADSYRIISQSIGLKPASILFVSDHPRECDAAAEAGMETRFCLREGNPFSDGGDHQMIHNLGEIKL</sequence>
<dbReference type="EC" id="3.1.3.77" evidence="1"/>
<dbReference type="EMBL" id="CT971583">
    <property type="protein sequence ID" value="CAK22963.1"/>
    <property type="molecule type" value="Genomic_DNA"/>
</dbReference>
<dbReference type="SMR" id="A5GJ48"/>
<dbReference type="STRING" id="32051.SynWH7803_0537"/>
<dbReference type="KEGG" id="syx:SynWH7803_0537"/>
<dbReference type="eggNOG" id="COG4229">
    <property type="taxonomic scope" value="Bacteria"/>
</dbReference>
<dbReference type="HOGENOM" id="CLU_023273_0_0_3"/>
<dbReference type="OrthoDB" id="9797416at2"/>
<dbReference type="UniPathway" id="UPA00904">
    <property type="reaction ID" value="UER00876"/>
</dbReference>
<dbReference type="UniPathway" id="UPA00904">
    <property type="reaction ID" value="UER00877"/>
</dbReference>
<dbReference type="Proteomes" id="UP000001566">
    <property type="component" value="Chromosome"/>
</dbReference>
<dbReference type="GO" id="GO:0043715">
    <property type="term" value="F:2,3-diketo-5-methylthiopentyl-1-phosphate enolase activity"/>
    <property type="evidence" value="ECO:0007669"/>
    <property type="project" value="UniProtKB-UniRule"/>
</dbReference>
<dbReference type="GO" id="GO:0043716">
    <property type="term" value="F:2-hydroxy-3-keto-5-methylthiopentenyl-1-phosphate phosphatase activity"/>
    <property type="evidence" value="ECO:0007669"/>
    <property type="project" value="UniProtKB-UniRule"/>
</dbReference>
<dbReference type="GO" id="GO:0043874">
    <property type="term" value="F:acireductone synthase activity"/>
    <property type="evidence" value="ECO:0007669"/>
    <property type="project" value="UniProtKB-EC"/>
</dbReference>
<dbReference type="GO" id="GO:0000287">
    <property type="term" value="F:magnesium ion binding"/>
    <property type="evidence" value="ECO:0007669"/>
    <property type="project" value="UniProtKB-UniRule"/>
</dbReference>
<dbReference type="GO" id="GO:0019509">
    <property type="term" value="P:L-methionine salvage from methylthioadenosine"/>
    <property type="evidence" value="ECO:0007669"/>
    <property type="project" value="UniProtKB-UniRule"/>
</dbReference>
<dbReference type="CDD" id="cd01629">
    <property type="entry name" value="HAD_EP"/>
    <property type="match status" value="1"/>
</dbReference>
<dbReference type="Gene3D" id="1.10.720.60">
    <property type="match status" value="1"/>
</dbReference>
<dbReference type="Gene3D" id="3.40.50.1000">
    <property type="entry name" value="HAD superfamily/HAD-like"/>
    <property type="match status" value="1"/>
</dbReference>
<dbReference type="HAMAP" id="MF_01681">
    <property type="entry name" value="Salvage_MtnC"/>
    <property type="match status" value="1"/>
</dbReference>
<dbReference type="InterPro" id="IPR023943">
    <property type="entry name" value="Enolase-ppase_E1"/>
</dbReference>
<dbReference type="InterPro" id="IPR036412">
    <property type="entry name" value="HAD-like_sf"/>
</dbReference>
<dbReference type="InterPro" id="IPR023214">
    <property type="entry name" value="HAD_sf"/>
</dbReference>
<dbReference type="NCBIfam" id="TIGR01691">
    <property type="entry name" value="enolase-ppase"/>
    <property type="match status" value="1"/>
</dbReference>
<dbReference type="PANTHER" id="PTHR20371">
    <property type="entry name" value="ENOLASE-PHOSPHATASE E1"/>
    <property type="match status" value="1"/>
</dbReference>
<dbReference type="PANTHER" id="PTHR20371:SF1">
    <property type="entry name" value="ENOLASE-PHOSPHATASE E1"/>
    <property type="match status" value="1"/>
</dbReference>
<dbReference type="Pfam" id="PF00702">
    <property type="entry name" value="Hydrolase"/>
    <property type="match status" value="1"/>
</dbReference>
<dbReference type="SFLD" id="SFLDF00044">
    <property type="entry name" value="enolase-phosphatase"/>
    <property type="match status" value="1"/>
</dbReference>
<dbReference type="SFLD" id="SFLDS00003">
    <property type="entry name" value="Haloacid_Dehalogenase"/>
    <property type="match status" value="1"/>
</dbReference>
<dbReference type="SUPFAM" id="SSF56784">
    <property type="entry name" value="HAD-like"/>
    <property type="match status" value="1"/>
</dbReference>
<gene>
    <name evidence="1" type="primary">mtnC</name>
    <name type="ordered locus">SynWH7803_0537</name>
</gene>
<organism>
    <name type="scientific">Synechococcus sp. (strain WH7803)</name>
    <dbReference type="NCBI Taxonomy" id="32051"/>
    <lineage>
        <taxon>Bacteria</taxon>
        <taxon>Bacillati</taxon>
        <taxon>Cyanobacteriota</taxon>
        <taxon>Cyanophyceae</taxon>
        <taxon>Synechococcales</taxon>
        <taxon>Synechococcaceae</taxon>
        <taxon>Synechococcus</taxon>
    </lineage>
</organism>